<feature type="chain" id="PRO_1000187389" description="2-hydroxy-3-keto-5-methylthiopentenyl-1-phosphate phosphatase">
    <location>
        <begin position="1"/>
        <end position="222"/>
    </location>
</feature>
<evidence type="ECO:0000255" key="1">
    <source>
        <dbReference type="HAMAP-Rule" id="MF_01680"/>
    </source>
</evidence>
<keyword id="KW-0028">Amino-acid biosynthesis</keyword>
<keyword id="KW-0378">Hydrolase</keyword>
<keyword id="KW-0486">Methionine biosynthesis</keyword>
<keyword id="KW-1185">Reference proteome</keyword>
<name>MTNX_BREBN</name>
<comment type="function">
    <text evidence="1">Dephosphorylates 2-hydroxy-3-keto-5-methylthiopentenyl-1-phosphate (HK-MTPenyl-1-P) yielding 1,2-dihydroxy-3-keto-5-methylthiopentene (DHK-MTPene).</text>
</comment>
<comment type="catalytic activity">
    <reaction evidence="1">
        <text>2-hydroxy-5-methylsulfanyl-3-oxopent-1-enyl phosphate + H2O = 1,2-dihydroxy-5-(methylsulfanyl)pent-1-en-3-one + phosphate</text>
        <dbReference type="Rhea" id="RHEA:14481"/>
        <dbReference type="ChEBI" id="CHEBI:15377"/>
        <dbReference type="ChEBI" id="CHEBI:43474"/>
        <dbReference type="ChEBI" id="CHEBI:49252"/>
        <dbReference type="ChEBI" id="CHEBI:59505"/>
        <dbReference type="EC" id="3.1.3.87"/>
    </reaction>
</comment>
<comment type="pathway">
    <text evidence="1">Amino-acid biosynthesis; L-methionine biosynthesis via salvage pathway; L-methionine from S-methyl-5-thio-alpha-D-ribose 1-phosphate: step 4/6.</text>
</comment>
<comment type="similarity">
    <text evidence="1">Belongs to the HAD-like hydrolase superfamily. MtnX family.</text>
</comment>
<gene>
    <name evidence="1" type="primary">mtnX</name>
    <name type="ordered locus">BBR47_48910</name>
</gene>
<proteinExistence type="inferred from homology"/>
<reference key="1">
    <citation type="submission" date="2005-03" db="EMBL/GenBank/DDBJ databases">
        <title>Brevibacillus brevis strain 47, complete genome.</title>
        <authorList>
            <person name="Hosoyama A."/>
            <person name="Yamada R."/>
            <person name="Hongo Y."/>
            <person name="Terui Y."/>
            <person name="Ankai A."/>
            <person name="Masuyama W."/>
            <person name="Sekiguchi M."/>
            <person name="Takeda T."/>
            <person name="Asano K."/>
            <person name="Ohji S."/>
            <person name="Ichikawa N."/>
            <person name="Narita S."/>
            <person name="Aoki N."/>
            <person name="Miura H."/>
            <person name="Matsushita S."/>
            <person name="Sekigawa T."/>
            <person name="Yamagata H."/>
            <person name="Yoshikawa H."/>
            <person name="Udaka S."/>
            <person name="Tanikawa S."/>
            <person name="Fujita N."/>
        </authorList>
    </citation>
    <scope>NUCLEOTIDE SEQUENCE [LARGE SCALE GENOMIC DNA]</scope>
    <source>
        <strain>47 / JCM 6285 / NBRC 100599</strain>
    </source>
</reference>
<dbReference type="EC" id="3.1.3.87" evidence="1"/>
<dbReference type="EMBL" id="AP008955">
    <property type="protein sequence ID" value="BAH45868.1"/>
    <property type="molecule type" value="Genomic_DNA"/>
</dbReference>
<dbReference type="RefSeq" id="WP_015893123.1">
    <property type="nucleotide sequence ID" value="NC_012491.1"/>
</dbReference>
<dbReference type="SMR" id="C0ZL41"/>
<dbReference type="STRING" id="358681.BBR47_48910"/>
<dbReference type="KEGG" id="bbe:BBR47_48910"/>
<dbReference type="eggNOG" id="COG4359">
    <property type="taxonomic scope" value="Bacteria"/>
</dbReference>
<dbReference type="HOGENOM" id="CLU_058495_2_1_9"/>
<dbReference type="UniPathway" id="UPA00904">
    <property type="reaction ID" value="UER00877"/>
</dbReference>
<dbReference type="Proteomes" id="UP000001877">
    <property type="component" value="Chromosome"/>
</dbReference>
<dbReference type="GO" id="GO:0043716">
    <property type="term" value="F:2-hydroxy-3-keto-5-methylthiopentenyl-1-phosphate phosphatase activity"/>
    <property type="evidence" value="ECO:0007669"/>
    <property type="project" value="UniProtKB-UniRule"/>
</dbReference>
<dbReference type="GO" id="GO:0019509">
    <property type="term" value="P:L-methionine salvage from methylthioadenosine"/>
    <property type="evidence" value="ECO:0007669"/>
    <property type="project" value="UniProtKB-UniRule"/>
</dbReference>
<dbReference type="CDD" id="cd07524">
    <property type="entry name" value="HAD_Pase"/>
    <property type="match status" value="1"/>
</dbReference>
<dbReference type="Gene3D" id="3.90.1470.20">
    <property type="match status" value="1"/>
</dbReference>
<dbReference type="Gene3D" id="3.40.50.1000">
    <property type="entry name" value="HAD superfamily/HAD-like"/>
    <property type="match status" value="1"/>
</dbReference>
<dbReference type="HAMAP" id="MF_01680">
    <property type="entry name" value="Salvage_MtnX"/>
    <property type="match status" value="1"/>
</dbReference>
<dbReference type="InterPro" id="IPR050849">
    <property type="entry name" value="HAD-like_hydrolase_phosphatase"/>
</dbReference>
<dbReference type="InterPro" id="IPR036412">
    <property type="entry name" value="HAD-like_sf"/>
</dbReference>
<dbReference type="InterPro" id="IPR017718">
    <property type="entry name" value="HAD-SF_hydro_IB_MtnX"/>
</dbReference>
<dbReference type="InterPro" id="IPR006384">
    <property type="entry name" value="HAD_hydro_PyrdxlP_Pase-like"/>
</dbReference>
<dbReference type="InterPro" id="IPR023214">
    <property type="entry name" value="HAD_sf"/>
</dbReference>
<dbReference type="NCBIfam" id="TIGR01489">
    <property type="entry name" value="DKMTPPase-SF"/>
    <property type="match status" value="1"/>
</dbReference>
<dbReference type="NCBIfam" id="TIGR01488">
    <property type="entry name" value="HAD-SF-IB"/>
    <property type="match status" value="1"/>
</dbReference>
<dbReference type="NCBIfam" id="NF007103">
    <property type="entry name" value="PRK09552.1"/>
    <property type="match status" value="1"/>
</dbReference>
<dbReference type="PANTHER" id="PTHR28181:SF2">
    <property type="entry name" value="PHOSPHORIC MONOESTER HYDROLASE"/>
    <property type="match status" value="1"/>
</dbReference>
<dbReference type="PANTHER" id="PTHR28181">
    <property type="entry name" value="UPF0655 PROTEIN YCR015C"/>
    <property type="match status" value="1"/>
</dbReference>
<dbReference type="Pfam" id="PF12710">
    <property type="entry name" value="HAD"/>
    <property type="match status" value="1"/>
</dbReference>
<dbReference type="SUPFAM" id="SSF56784">
    <property type="entry name" value="HAD-like"/>
    <property type="match status" value="1"/>
</dbReference>
<protein>
    <recommendedName>
        <fullName evidence="1">2-hydroxy-3-keto-5-methylthiopentenyl-1-phosphate phosphatase</fullName>
        <shortName evidence="1">HK-MTPenyl-1-P phosphatase</shortName>
        <ecNumber evidence="1">3.1.3.87</ecNumber>
    </recommendedName>
</protein>
<accession>C0ZL41</accession>
<organism>
    <name type="scientific">Brevibacillus brevis (strain 47 / JCM 6285 / NBRC 100599)</name>
    <dbReference type="NCBI Taxonomy" id="358681"/>
    <lineage>
        <taxon>Bacteria</taxon>
        <taxon>Bacillati</taxon>
        <taxon>Bacillota</taxon>
        <taxon>Bacilli</taxon>
        <taxon>Bacillales</taxon>
        <taxon>Paenibacillaceae</taxon>
        <taxon>Brevibacillus</taxon>
    </lineage>
</organism>
<sequence>MSKKLVLFCDFDGTITEKDNIVAIVRKFAPPEWEALTEQILSQKISVQEGVGKLFQLLPSSLRQDIIDFIVHEATIRPGFAEFVSYCREEGIELLITSGGIDFFLEPILAPFDLADVPIYCNGSDFSGERITITWPNACDEHCTNGCGMCKTTIIRRYDPATHFRIVIGDSITDLAGAKIADYVIARSFLADKAEELQLPHSTFATFHDVIRILQQVQQEVV</sequence>